<proteinExistence type="inferred from homology"/>
<comment type="function">
    <text evidence="1">DNA-dependent RNA polymerase catalyzes the transcription of DNA into RNA using the four ribonucleoside triphosphates as substrates.</text>
</comment>
<comment type="catalytic activity">
    <reaction evidence="1">
        <text>RNA(n) + a ribonucleoside 5'-triphosphate = RNA(n+1) + diphosphate</text>
        <dbReference type="Rhea" id="RHEA:21248"/>
        <dbReference type="Rhea" id="RHEA-COMP:14527"/>
        <dbReference type="Rhea" id="RHEA-COMP:17342"/>
        <dbReference type="ChEBI" id="CHEBI:33019"/>
        <dbReference type="ChEBI" id="CHEBI:61557"/>
        <dbReference type="ChEBI" id="CHEBI:140395"/>
        <dbReference type="EC" id="2.7.7.6"/>
    </reaction>
</comment>
<comment type="subunit">
    <text evidence="1">The RNAP catalytic core consists of 2 alpha, 1 beta, 1 beta' and 1 omega subunit. When a sigma factor is associated with the core the holoenzyme is formed, which can initiate transcription.</text>
</comment>
<comment type="similarity">
    <text evidence="1">Belongs to the RNA polymerase beta chain family.</text>
</comment>
<gene>
    <name evidence="1" type="primary">rpoB</name>
    <name type="ordered locus">lwe0227</name>
</gene>
<keyword id="KW-0240">DNA-directed RNA polymerase</keyword>
<keyword id="KW-0548">Nucleotidyltransferase</keyword>
<keyword id="KW-0804">Transcription</keyword>
<keyword id="KW-0808">Transferase</keyword>
<evidence type="ECO:0000255" key="1">
    <source>
        <dbReference type="HAMAP-Rule" id="MF_01321"/>
    </source>
</evidence>
<evidence type="ECO:0000256" key="2">
    <source>
        <dbReference type="SAM" id="MobiDB-lite"/>
    </source>
</evidence>
<feature type="chain" id="PRO_0000300341" description="DNA-directed RNA polymerase subunit beta">
    <location>
        <begin position="1"/>
        <end position="1184"/>
    </location>
</feature>
<feature type="region of interest" description="Disordered" evidence="2">
    <location>
        <begin position="1160"/>
        <end position="1184"/>
    </location>
</feature>
<reference key="1">
    <citation type="journal article" date="2006" name="J. Bacteriol.">
        <title>Whole-genome sequence of Listeria welshimeri reveals common steps in genome reduction with Listeria innocua as compared to Listeria monocytogenes.</title>
        <authorList>
            <person name="Hain T."/>
            <person name="Steinweg C."/>
            <person name="Kuenne C.T."/>
            <person name="Billion A."/>
            <person name="Ghai R."/>
            <person name="Chatterjee S.S."/>
            <person name="Domann E."/>
            <person name="Kaerst U."/>
            <person name="Goesmann A."/>
            <person name="Bekel T."/>
            <person name="Bartels D."/>
            <person name="Kaiser O."/>
            <person name="Meyer F."/>
            <person name="Puehler A."/>
            <person name="Weisshaar B."/>
            <person name="Wehland J."/>
            <person name="Liang C."/>
            <person name="Dandekar T."/>
            <person name="Lampidis R."/>
            <person name="Kreft J."/>
            <person name="Goebel W."/>
            <person name="Chakraborty T."/>
        </authorList>
    </citation>
    <scope>NUCLEOTIDE SEQUENCE [LARGE SCALE GENOMIC DNA]</scope>
    <source>
        <strain>ATCC 35897 / DSM 20650 / CCUG 15529 / CIP 8149 / NCTC 11857 / SLCC 5334 / V8</strain>
    </source>
</reference>
<organism>
    <name type="scientific">Listeria welshimeri serovar 6b (strain ATCC 35897 / DSM 20650 / CCUG 15529 / CIP 8149 / NCTC 11857 / SLCC 5334 / V8)</name>
    <dbReference type="NCBI Taxonomy" id="386043"/>
    <lineage>
        <taxon>Bacteria</taxon>
        <taxon>Bacillati</taxon>
        <taxon>Bacillota</taxon>
        <taxon>Bacilli</taxon>
        <taxon>Bacillales</taxon>
        <taxon>Listeriaceae</taxon>
        <taxon>Listeria</taxon>
    </lineage>
</organism>
<name>RPOB_LISW6</name>
<protein>
    <recommendedName>
        <fullName evidence="1">DNA-directed RNA polymerase subunit beta</fullName>
        <shortName evidence="1">RNAP subunit beta</shortName>
        <ecNumber evidence="1">2.7.7.6</ecNumber>
    </recommendedName>
    <alternativeName>
        <fullName evidence="1">RNA polymerase subunit beta</fullName>
    </alternativeName>
    <alternativeName>
        <fullName evidence="1">Transcriptase subunit beta</fullName>
    </alternativeName>
</protein>
<dbReference type="EC" id="2.7.7.6" evidence="1"/>
<dbReference type="EMBL" id="AM263198">
    <property type="protein sequence ID" value="CAK19645.1"/>
    <property type="molecule type" value="Genomic_DNA"/>
</dbReference>
<dbReference type="RefSeq" id="WP_011701086.1">
    <property type="nucleotide sequence ID" value="NC_008555.1"/>
</dbReference>
<dbReference type="SMR" id="A0AF63"/>
<dbReference type="STRING" id="386043.lwe0227"/>
<dbReference type="GeneID" id="61188120"/>
<dbReference type="KEGG" id="lwe:lwe0227"/>
<dbReference type="eggNOG" id="COG0085">
    <property type="taxonomic scope" value="Bacteria"/>
</dbReference>
<dbReference type="HOGENOM" id="CLU_000524_4_1_9"/>
<dbReference type="OrthoDB" id="9803954at2"/>
<dbReference type="Proteomes" id="UP000000779">
    <property type="component" value="Chromosome"/>
</dbReference>
<dbReference type="GO" id="GO:0000428">
    <property type="term" value="C:DNA-directed RNA polymerase complex"/>
    <property type="evidence" value="ECO:0007669"/>
    <property type="project" value="UniProtKB-KW"/>
</dbReference>
<dbReference type="GO" id="GO:0003677">
    <property type="term" value="F:DNA binding"/>
    <property type="evidence" value="ECO:0007669"/>
    <property type="project" value="UniProtKB-UniRule"/>
</dbReference>
<dbReference type="GO" id="GO:0003899">
    <property type="term" value="F:DNA-directed RNA polymerase activity"/>
    <property type="evidence" value="ECO:0007669"/>
    <property type="project" value="UniProtKB-UniRule"/>
</dbReference>
<dbReference type="GO" id="GO:0032549">
    <property type="term" value="F:ribonucleoside binding"/>
    <property type="evidence" value="ECO:0007669"/>
    <property type="project" value="InterPro"/>
</dbReference>
<dbReference type="GO" id="GO:0006351">
    <property type="term" value="P:DNA-templated transcription"/>
    <property type="evidence" value="ECO:0007669"/>
    <property type="project" value="UniProtKB-UniRule"/>
</dbReference>
<dbReference type="CDD" id="cd00653">
    <property type="entry name" value="RNA_pol_B_RPB2"/>
    <property type="match status" value="1"/>
</dbReference>
<dbReference type="FunFam" id="3.90.1800.10:FF:000001">
    <property type="entry name" value="DNA-directed RNA polymerase subunit beta"/>
    <property type="match status" value="1"/>
</dbReference>
<dbReference type="Gene3D" id="2.40.50.100">
    <property type="match status" value="1"/>
</dbReference>
<dbReference type="Gene3D" id="2.40.50.150">
    <property type="match status" value="1"/>
</dbReference>
<dbReference type="Gene3D" id="3.90.1100.10">
    <property type="match status" value="3"/>
</dbReference>
<dbReference type="Gene3D" id="2.40.270.10">
    <property type="entry name" value="DNA-directed RNA polymerase, subunit 2, domain 6"/>
    <property type="match status" value="1"/>
</dbReference>
<dbReference type="Gene3D" id="3.90.1800.10">
    <property type="entry name" value="RNA polymerase alpha subunit dimerisation domain"/>
    <property type="match status" value="1"/>
</dbReference>
<dbReference type="Gene3D" id="3.90.1110.10">
    <property type="entry name" value="RNA polymerase Rpb2, domain 2"/>
    <property type="match status" value="1"/>
</dbReference>
<dbReference type="HAMAP" id="MF_01321">
    <property type="entry name" value="RNApol_bact_RpoB"/>
    <property type="match status" value="1"/>
</dbReference>
<dbReference type="InterPro" id="IPR019462">
    <property type="entry name" value="DNA-dir_RNA_pol_bsu_external_1"/>
</dbReference>
<dbReference type="InterPro" id="IPR015712">
    <property type="entry name" value="DNA-dir_RNA_pol_su2"/>
</dbReference>
<dbReference type="InterPro" id="IPR007120">
    <property type="entry name" value="DNA-dir_RNAP_su2_dom"/>
</dbReference>
<dbReference type="InterPro" id="IPR037033">
    <property type="entry name" value="DNA-dir_RNAP_su2_hyb_sf"/>
</dbReference>
<dbReference type="InterPro" id="IPR010243">
    <property type="entry name" value="RNA_pol_bsu_bac"/>
</dbReference>
<dbReference type="InterPro" id="IPR007121">
    <property type="entry name" value="RNA_pol_bsu_CS"/>
</dbReference>
<dbReference type="InterPro" id="IPR007644">
    <property type="entry name" value="RNA_pol_bsu_protrusion"/>
</dbReference>
<dbReference type="InterPro" id="IPR007642">
    <property type="entry name" value="RNA_pol_Rpb2_2"/>
</dbReference>
<dbReference type="InterPro" id="IPR037034">
    <property type="entry name" value="RNA_pol_Rpb2_2_sf"/>
</dbReference>
<dbReference type="InterPro" id="IPR007645">
    <property type="entry name" value="RNA_pol_Rpb2_3"/>
</dbReference>
<dbReference type="InterPro" id="IPR007641">
    <property type="entry name" value="RNA_pol_Rpb2_7"/>
</dbReference>
<dbReference type="InterPro" id="IPR014724">
    <property type="entry name" value="RNA_pol_RPB2_OB-fold"/>
</dbReference>
<dbReference type="NCBIfam" id="NF001616">
    <property type="entry name" value="PRK00405.1"/>
    <property type="match status" value="1"/>
</dbReference>
<dbReference type="NCBIfam" id="TIGR02013">
    <property type="entry name" value="rpoB"/>
    <property type="match status" value="1"/>
</dbReference>
<dbReference type="PANTHER" id="PTHR20856">
    <property type="entry name" value="DNA-DIRECTED RNA POLYMERASE I SUBUNIT 2"/>
    <property type="match status" value="1"/>
</dbReference>
<dbReference type="Pfam" id="PF04563">
    <property type="entry name" value="RNA_pol_Rpb2_1"/>
    <property type="match status" value="1"/>
</dbReference>
<dbReference type="Pfam" id="PF04561">
    <property type="entry name" value="RNA_pol_Rpb2_2"/>
    <property type="match status" value="2"/>
</dbReference>
<dbReference type="Pfam" id="PF04565">
    <property type="entry name" value="RNA_pol_Rpb2_3"/>
    <property type="match status" value="1"/>
</dbReference>
<dbReference type="Pfam" id="PF10385">
    <property type="entry name" value="RNA_pol_Rpb2_45"/>
    <property type="match status" value="1"/>
</dbReference>
<dbReference type="Pfam" id="PF00562">
    <property type="entry name" value="RNA_pol_Rpb2_6"/>
    <property type="match status" value="1"/>
</dbReference>
<dbReference type="Pfam" id="PF04560">
    <property type="entry name" value="RNA_pol_Rpb2_7"/>
    <property type="match status" value="1"/>
</dbReference>
<dbReference type="SUPFAM" id="SSF64484">
    <property type="entry name" value="beta and beta-prime subunits of DNA dependent RNA-polymerase"/>
    <property type="match status" value="1"/>
</dbReference>
<dbReference type="PROSITE" id="PS01166">
    <property type="entry name" value="RNA_POL_BETA"/>
    <property type="match status" value="1"/>
</dbReference>
<sequence>MSGHSGHDVKYGRHRTRRSFARISEVLELPNLIEIQTASYQWFLDEGLREMFRDISPIEDFAGNLSLEFIDYDLGEPKYSVEESKNRDANYAAPLRVKLRLINKETGEVKDQEVFMGDFPLMTEMGTFIINGAERVIVSQLVRSPGVYFNGKLDKNGKKGFGSTVIPNRGAWLEYETDAKDVVHVRIDRTRKLPVTVLLRALGFGSDQEIIDLIGDNDYLRNTLEKDNTDNAEKALLEIYERLRPGEPPTVDNARSLLVSRFFDPKRYDLASVGRYKINKKLHLKNRLFNQTLAETLVDPETGEIIASKGDILDRRNLDQIIPNLENGVGFRTLRPTDGVMEDSVLVQSIKIYAPNDEEKEINIIGNAYIEENVKHITPSDIISSISYFFNLLHGVGDTDDIDHLGNRRLRSVGELLQNQFRIGLSRMERVVRERMSIQDMTTITPQQLINIRPVVASIKEFFGSSQLSQFMDQTNPLGELTHKRRLSALGPGGLTRERAGYEVRDVHYSHYGRMCPIETPEGPNIGLINSLSSFAKVNKFGFIETPYRRVDPETNRVTDKIDYLTADEEDNYVVAQANSKLDEQGTFTEEEVMARFRSENLAVEKERIDYMDVSPKQVVSVATACIPFLENDDSNRALMGANMQRQAVPLMHPEAPFVGTGMEHVSAKDSGAAVTAKHDGIVEHVEAREIWVRRVSLVDGKEVTGGIDKYTLRKFVRSNQGTCYNQRPNVAEGDRVVKGEILGNGPSMDSGELALGRNVLVAFMTWDGYNYEDAIIMSERLVKDDVYTSIHIEEFESEARDTKLGPEEMTRDIPNVGEDALRDLDERGIIRVGAEVKDNDLLVGKVTPKGVTELTAEERLLHAIFGEKAREVRDTSLRVPHGGGGIVLDVKIFTREAGDELPPGVNQLVRVYIVQKRKIHEGDKMAGRHGNKGVISRILPEEDMPFMPDGTPVDIMLNPLGVPSRMNIGQVLELHLGMAARALGIHVATPVFDGANEEDVWSTVEEAGMARDAKTVLYDGRSGEAFDNRISVGVMYMIKLAHMVDDKLHARSTGPYSLVTQQPLGGKAQFGGQRFGEMEVWALEAYGAAYTLQEILTIKSDDVVGRVKTYEAIVKGESVPEPGVPESFKVLIKELQSLGMDVKMLSADEEEIEMRDMDDDDFTNQNDAFNIVQPENAAAEKTE</sequence>
<accession>A0AF63</accession>